<dbReference type="EC" id="7.2.2.6" evidence="1"/>
<dbReference type="EMBL" id="AL591984">
    <property type="protein sequence ID" value="CAD00894.1"/>
    <property type="molecule type" value="Genomic_DNA"/>
</dbReference>
<dbReference type="PIR" id="AH1409">
    <property type="entry name" value="AH1409"/>
</dbReference>
<dbReference type="RefSeq" id="NP_466203.1">
    <property type="nucleotide sequence ID" value="NC_003210.1"/>
</dbReference>
<dbReference type="RefSeq" id="WP_003733062.1">
    <property type="nucleotide sequence ID" value="NZ_CP149495.1"/>
</dbReference>
<dbReference type="SMR" id="Q8Y3Z7"/>
<dbReference type="STRING" id="169963.gene:17595398"/>
<dbReference type="PaxDb" id="169963-lmo2681"/>
<dbReference type="EnsemblBacteria" id="CAD00894">
    <property type="protein sequence ID" value="CAD00894"/>
    <property type="gene ID" value="CAD00894"/>
</dbReference>
<dbReference type="GeneID" id="987149"/>
<dbReference type="KEGG" id="lmo:lmo2681"/>
<dbReference type="PATRIC" id="fig|169963.11.peg.2747"/>
<dbReference type="eggNOG" id="COG2216">
    <property type="taxonomic scope" value="Bacteria"/>
</dbReference>
<dbReference type="HOGENOM" id="CLU_025728_2_0_9"/>
<dbReference type="OrthoDB" id="9813266at2"/>
<dbReference type="PhylomeDB" id="Q8Y3Z7"/>
<dbReference type="BioCyc" id="LMON169963:LMO2681-MONOMER"/>
<dbReference type="Proteomes" id="UP000000817">
    <property type="component" value="Chromosome"/>
</dbReference>
<dbReference type="GO" id="GO:0005886">
    <property type="term" value="C:plasma membrane"/>
    <property type="evidence" value="ECO:0000318"/>
    <property type="project" value="GO_Central"/>
</dbReference>
<dbReference type="GO" id="GO:0031004">
    <property type="term" value="C:potassium ion-transporting ATPase complex"/>
    <property type="evidence" value="ECO:0000318"/>
    <property type="project" value="GO_Central"/>
</dbReference>
<dbReference type="GO" id="GO:1903103">
    <property type="term" value="C:potassium:proton antiporter complex"/>
    <property type="evidence" value="ECO:0000318"/>
    <property type="project" value="GO_Central"/>
</dbReference>
<dbReference type="GO" id="GO:0005524">
    <property type="term" value="F:ATP binding"/>
    <property type="evidence" value="ECO:0007669"/>
    <property type="project" value="UniProtKB-UniRule"/>
</dbReference>
<dbReference type="GO" id="GO:0016887">
    <property type="term" value="F:ATP hydrolysis activity"/>
    <property type="evidence" value="ECO:0007669"/>
    <property type="project" value="InterPro"/>
</dbReference>
<dbReference type="GO" id="GO:0000287">
    <property type="term" value="F:magnesium ion binding"/>
    <property type="evidence" value="ECO:0007669"/>
    <property type="project" value="UniProtKB-UniRule"/>
</dbReference>
<dbReference type="GO" id="GO:0008556">
    <property type="term" value="F:P-type potassium transmembrane transporter activity"/>
    <property type="evidence" value="ECO:0000318"/>
    <property type="project" value="GO_Central"/>
</dbReference>
<dbReference type="GO" id="GO:0071805">
    <property type="term" value="P:potassium ion transmembrane transport"/>
    <property type="evidence" value="ECO:0000318"/>
    <property type="project" value="GO_Central"/>
</dbReference>
<dbReference type="CDD" id="cd02078">
    <property type="entry name" value="P-type_ATPase_K"/>
    <property type="match status" value="1"/>
</dbReference>
<dbReference type="FunFam" id="2.70.150.10:FF:000010">
    <property type="entry name" value="Potassium-transporting ATPase ATP-binding subunit"/>
    <property type="match status" value="1"/>
</dbReference>
<dbReference type="FunFam" id="3.40.1110.10:FF:000007">
    <property type="entry name" value="Potassium-transporting ATPase ATP-binding subunit"/>
    <property type="match status" value="1"/>
</dbReference>
<dbReference type="Gene3D" id="3.40.1110.10">
    <property type="entry name" value="Calcium-transporting ATPase, cytoplasmic domain N"/>
    <property type="match status" value="1"/>
</dbReference>
<dbReference type="Gene3D" id="2.70.150.10">
    <property type="entry name" value="Calcium-transporting ATPase, cytoplasmic transduction domain A"/>
    <property type="match status" value="1"/>
</dbReference>
<dbReference type="Gene3D" id="3.40.50.1000">
    <property type="entry name" value="HAD superfamily/HAD-like"/>
    <property type="match status" value="1"/>
</dbReference>
<dbReference type="HAMAP" id="MF_00285">
    <property type="entry name" value="KdpB"/>
    <property type="match status" value="1"/>
</dbReference>
<dbReference type="InterPro" id="IPR023299">
    <property type="entry name" value="ATPase_P-typ_cyto_dom_N"/>
</dbReference>
<dbReference type="InterPro" id="IPR018303">
    <property type="entry name" value="ATPase_P-typ_P_site"/>
</dbReference>
<dbReference type="InterPro" id="IPR023298">
    <property type="entry name" value="ATPase_P-typ_TM_dom_sf"/>
</dbReference>
<dbReference type="InterPro" id="IPR008250">
    <property type="entry name" value="ATPase_P-typ_transduc_dom_A_sf"/>
</dbReference>
<dbReference type="InterPro" id="IPR036412">
    <property type="entry name" value="HAD-like_sf"/>
</dbReference>
<dbReference type="InterPro" id="IPR023214">
    <property type="entry name" value="HAD_sf"/>
</dbReference>
<dbReference type="InterPro" id="IPR006391">
    <property type="entry name" value="P-type_ATPase_bsu_IA"/>
</dbReference>
<dbReference type="InterPro" id="IPR001757">
    <property type="entry name" value="P_typ_ATPase"/>
</dbReference>
<dbReference type="InterPro" id="IPR044492">
    <property type="entry name" value="P_typ_ATPase_HD_dom"/>
</dbReference>
<dbReference type="NCBIfam" id="TIGR01494">
    <property type="entry name" value="ATPase_P-type"/>
    <property type="match status" value="2"/>
</dbReference>
<dbReference type="NCBIfam" id="TIGR01497">
    <property type="entry name" value="kdpB"/>
    <property type="match status" value="1"/>
</dbReference>
<dbReference type="PANTHER" id="PTHR43743">
    <property type="entry name" value="POTASSIUM-TRANSPORTING ATPASE ATP-BINDING SUBUNIT"/>
    <property type="match status" value="1"/>
</dbReference>
<dbReference type="PANTHER" id="PTHR43743:SF1">
    <property type="entry name" value="POTASSIUM-TRANSPORTING ATPASE ATP-BINDING SUBUNIT"/>
    <property type="match status" value="1"/>
</dbReference>
<dbReference type="Pfam" id="PF00122">
    <property type="entry name" value="E1-E2_ATPase"/>
    <property type="match status" value="1"/>
</dbReference>
<dbReference type="Pfam" id="PF00702">
    <property type="entry name" value="Hydrolase"/>
    <property type="match status" value="1"/>
</dbReference>
<dbReference type="PRINTS" id="PR00119">
    <property type="entry name" value="CATATPASE"/>
</dbReference>
<dbReference type="PRINTS" id="PR00120">
    <property type="entry name" value="HATPASE"/>
</dbReference>
<dbReference type="SFLD" id="SFLDS00003">
    <property type="entry name" value="Haloacid_Dehalogenase"/>
    <property type="match status" value="1"/>
</dbReference>
<dbReference type="SFLD" id="SFLDF00027">
    <property type="entry name" value="p-type_atpase"/>
    <property type="match status" value="1"/>
</dbReference>
<dbReference type="SUPFAM" id="SSF81653">
    <property type="entry name" value="Calcium ATPase, transduction domain A"/>
    <property type="match status" value="1"/>
</dbReference>
<dbReference type="SUPFAM" id="SSF81665">
    <property type="entry name" value="Calcium ATPase, transmembrane domain M"/>
    <property type="match status" value="1"/>
</dbReference>
<dbReference type="SUPFAM" id="SSF56784">
    <property type="entry name" value="HAD-like"/>
    <property type="match status" value="1"/>
</dbReference>
<dbReference type="SUPFAM" id="SSF81660">
    <property type="entry name" value="Metal cation-transporting ATPase, ATP-binding domain N"/>
    <property type="match status" value="1"/>
</dbReference>
<dbReference type="PROSITE" id="PS00154">
    <property type="entry name" value="ATPASE_E1_E2"/>
    <property type="match status" value="1"/>
</dbReference>
<name>KDPB_LISMO</name>
<proteinExistence type="inferred from homology"/>
<organism>
    <name type="scientific">Listeria monocytogenes serovar 1/2a (strain ATCC BAA-679 / EGD-e)</name>
    <dbReference type="NCBI Taxonomy" id="169963"/>
    <lineage>
        <taxon>Bacteria</taxon>
        <taxon>Bacillati</taxon>
        <taxon>Bacillota</taxon>
        <taxon>Bacilli</taxon>
        <taxon>Bacillales</taxon>
        <taxon>Listeriaceae</taxon>
        <taxon>Listeria</taxon>
    </lineage>
</organism>
<sequence>MMEKGIWKDALIQSTKKLSPKLQVKNPVMLLVYVGAILATSLYFLGFFGISDEKSGYTLAIALILWFTVLFANFAEAIAEGRGRAQADSLKMARKDVLARKLKNVDDKTDVIEVASNDLKKGDIVYVLANEQIPMDGEVIEGAASVDESAITGESAPVIRESGGDRSAVTGGTTLVSDWLVVRVTAVSGESFLDKMIAMVEGASRKKTPNEIALQILLVTLSIIFLAVSATLLPFTEFASKQAGAGSAISITNVIALLVCLAPTTIGALLSSIGIAGMSRLNQANVLAMSGRAIEAAGDVDVLLLDKTGTITLGNRKASEFLPVDGVTEQELADAAQLSSIADETAEGRSIVVLAKERFDIRGRDFAEMHAEFVPFTATTRMSGIDYQENTIRKGAADAVRAYVTANGGTYPKECDAIVSKVAGAGGTPLVVVRNNQVLGVIYLKDIVKNGVKERFLDLRKMGIKTIMITGDNPMTAAAIAAEAGVDDFLAEATPEAKLELIREYQREGHLVAMTGDGTNDAPALAQADVAVAMNTGTQAAKEAGNMVDLDSSPTKLIDIVRIGKQLLMTRGALTTFSVANDLAKYFAIIPVLFYGIFPQLEALNLMGLTSPTSAILSAIIYNAVIIIVLIPLSLKGVKYREMPAGKLLSRNMLIYGLGGLIAPFIAIKLIDMLLTVLGIV</sequence>
<accession>Q8Y3Z7</accession>
<feature type="chain" id="PRO_0000046124" description="Potassium-transporting ATPase ATP-binding subunit">
    <location>
        <begin position="1"/>
        <end position="681"/>
    </location>
</feature>
<feature type="transmembrane region" description="Helical" evidence="1">
    <location>
        <begin position="30"/>
        <end position="50"/>
    </location>
</feature>
<feature type="transmembrane region" description="Helical" evidence="1">
    <location>
        <begin position="59"/>
        <end position="79"/>
    </location>
</feature>
<feature type="transmembrane region" description="Helical" evidence="1">
    <location>
        <begin position="216"/>
        <end position="236"/>
    </location>
</feature>
<feature type="transmembrane region" description="Helical" evidence="1">
    <location>
        <begin position="255"/>
        <end position="275"/>
    </location>
</feature>
<feature type="transmembrane region" description="Helical" evidence="1">
    <location>
        <begin position="587"/>
        <end position="607"/>
    </location>
</feature>
<feature type="transmembrane region" description="Helical" evidence="1">
    <location>
        <begin position="615"/>
        <end position="635"/>
    </location>
</feature>
<feature type="transmembrane region" description="Helical" evidence="1">
    <location>
        <begin position="661"/>
        <end position="681"/>
    </location>
</feature>
<feature type="active site" description="4-aspartylphosphate intermediate" evidence="1">
    <location>
        <position position="306"/>
    </location>
</feature>
<feature type="binding site" evidence="1">
    <location>
        <position position="343"/>
    </location>
    <ligand>
        <name>ATP</name>
        <dbReference type="ChEBI" id="CHEBI:30616"/>
    </ligand>
</feature>
<feature type="binding site" evidence="1">
    <location>
        <position position="347"/>
    </location>
    <ligand>
        <name>ATP</name>
        <dbReference type="ChEBI" id="CHEBI:30616"/>
    </ligand>
</feature>
<feature type="binding site" evidence="1">
    <location>
        <begin position="376"/>
        <end position="383"/>
    </location>
    <ligand>
        <name>ATP</name>
        <dbReference type="ChEBI" id="CHEBI:30616"/>
    </ligand>
</feature>
<feature type="binding site" evidence="1">
    <location>
        <position position="394"/>
    </location>
    <ligand>
        <name>ATP</name>
        <dbReference type="ChEBI" id="CHEBI:30616"/>
    </ligand>
</feature>
<feature type="binding site" evidence="1">
    <location>
        <position position="517"/>
    </location>
    <ligand>
        <name>Mg(2+)</name>
        <dbReference type="ChEBI" id="CHEBI:18420"/>
    </ligand>
</feature>
<feature type="binding site" evidence="1">
    <location>
        <position position="521"/>
    </location>
    <ligand>
        <name>Mg(2+)</name>
        <dbReference type="ChEBI" id="CHEBI:18420"/>
    </ligand>
</feature>
<keyword id="KW-0067">ATP-binding</keyword>
<keyword id="KW-1003">Cell membrane</keyword>
<keyword id="KW-0406">Ion transport</keyword>
<keyword id="KW-0460">Magnesium</keyword>
<keyword id="KW-0472">Membrane</keyword>
<keyword id="KW-0479">Metal-binding</keyword>
<keyword id="KW-0547">Nucleotide-binding</keyword>
<keyword id="KW-0597">Phosphoprotein</keyword>
<keyword id="KW-0630">Potassium</keyword>
<keyword id="KW-0633">Potassium transport</keyword>
<keyword id="KW-1185">Reference proteome</keyword>
<keyword id="KW-1278">Translocase</keyword>
<keyword id="KW-0812">Transmembrane</keyword>
<keyword id="KW-1133">Transmembrane helix</keyword>
<keyword id="KW-0813">Transport</keyword>
<evidence type="ECO:0000255" key="1">
    <source>
        <dbReference type="HAMAP-Rule" id="MF_00285"/>
    </source>
</evidence>
<comment type="function">
    <text evidence="1">Part of the high-affinity ATP-driven potassium transport (or Kdp) system, which catalyzes the hydrolysis of ATP coupled with the electrogenic transport of potassium into the cytoplasm. This subunit is responsible for energy coupling to the transport system and for the release of the potassium ions to the cytoplasm.</text>
</comment>
<comment type="catalytic activity">
    <reaction evidence="1">
        <text>K(+)(out) + ATP + H2O = K(+)(in) + ADP + phosphate + H(+)</text>
        <dbReference type="Rhea" id="RHEA:16777"/>
        <dbReference type="ChEBI" id="CHEBI:15377"/>
        <dbReference type="ChEBI" id="CHEBI:15378"/>
        <dbReference type="ChEBI" id="CHEBI:29103"/>
        <dbReference type="ChEBI" id="CHEBI:30616"/>
        <dbReference type="ChEBI" id="CHEBI:43474"/>
        <dbReference type="ChEBI" id="CHEBI:456216"/>
        <dbReference type="EC" id="7.2.2.6"/>
    </reaction>
    <physiologicalReaction direction="left-to-right" evidence="1">
        <dbReference type="Rhea" id="RHEA:16778"/>
    </physiologicalReaction>
</comment>
<comment type="subunit">
    <text evidence="1">The system is composed of three essential subunits: KdpA, KdpB and KdpC.</text>
</comment>
<comment type="subcellular location">
    <subcellularLocation>
        <location evidence="1">Cell membrane</location>
        <topology evidence="1">Multi-pass membrane protein</topology>
    </subcellularLocation>
</comment>
<comment type="similarity">
    <text evidence="1">Belongs to the cation transport ATPase (P-type) (TC 3.A.3) family. Type IA subfamily.</text>
</comment>
<protein>
    <recommendedName>
        <fullName evidence="1">Potassium-transporting ATPase ATP-binding subunit</fullName>
        <ecNumber evidence="1">7.2.2.6</ecNumber>
    </recommendedName>
    <alternativeName>
        <fullName evidence="1">ATP phosphohydrolase [potassium-transporting] B chain</fullName>
    </alternativeName>
    <alternativeName>
        <fullName evidence="1">Potassium-binding and translocating subunit B</fullName>
    </alternativeName>
    <alternativeName>
        <fullName evidence="1">Potassium-translocating ATPase B chain</fullName>
    </alternativeName>
</protein>
<reference key="1">
    <citation type="journal article" date="2001" name="Science">
        <title>Comparative genomics of Listeria species.</title>
        <authorList>
            <person name="Glaser P."/>
            <person name="Frangeul L."/>
            <person name="Buchrieser C."/>
            <person name="Rusniok C."/>
            <person name="Amend A."/>
            <person name="Baquero F."/>
            <person name="Berche P."/>
            <person name="Bloecker H."/>
            <person name="Brandt P."/>
            <person name="Chakraborty T."/>
            <person name="Charbit A."/>
            <person name="Chetouani F."/>
            <person name="Couve E."/>
            <person name="de Daruvar A."/>
            <person name="Dehoux P."/>
            <person name="Domann E."/>
            <person name="Dominguez-Bernal G."/>
            <person name="Duchaud E."/>
            <person name="Durant L."/>
            <person name="Dussurget O."/>
            <person name="Entian K.-D."/>
            <person name="Fsihi H."/>
            <person name="Garcia-del Portillo F."/>
            <person name="Garrido P."/>
            <person name="Gautier L."/>
            <person name="Goebel W."/>
            <person name="Gomez-Lopez N."/>
            <person name="Hain T."/>
            <person name="Hauf J."/>
            <person name="Jackson D."/>
            <person name="Jones L.-M."/>
            <person name="Kaerst U."/>
            <person name="Kreft J."/>
            <person name="Kuhn M."/>
            <person name="Kunst F."/>
            <person name="Kurapkat G."/>
            <person name="Madueno E."/>
            <person name="Maitournam A."/>
            <person name="Mata Vicente J."/>
            <person name="Ng E."/>
            <person name="Nedjari H."/>
            <person name="Nordsiek G."/>
            <person name="Novella S."/>
            <person name="de Pablos B."/>
            <person name="Perez-Diaz J.-C."/>
            <person name="Purcell R."/>
            <person name="Remmel B."/>
            <person name="Rose M."/>
            <person name="Schlueter T."/>
            <person name="Simoes N."/>
            <person name="Tierrez A."/>
            <person name="Vazquez-Boland J.-A."/>
            <person name="Voss H."/>
            <person name="Wehland J."/>
            <person name="Cossart P."/>
        </authorList>
    </citation>
    <scope>NUCLEOTIDE SEQUENCE [LARGE SCALE GENOMIC DNA]</scope>
    <source>
        <strain>ATCC BAA-679 / EGD-e</strain>
    </source>
</reference>
<gene>
    <name evidence="1" type="primary">kdpB</name>
    <name type="ordered locus">lmo2681</name>
</gene>